<feature type="chain" id="PRO_1000001408" description="Holliday junction branch migration complex subunit RuvB">
    <location>
        <begin position="1"/>
        <end position="348"/>
    </location>
</feature>
<feature type="region of interest" description="Large ATPase domain (RuvB-L)" evidence="1">
    <location>
        <begin position="4"/>
        <end position="186"/>
    </location>
</feature>
<feature type="region of interest" description="Small ATPAse domain (RuvB-S)" evidence="1">
    <location>
        <begin position="187"/>
        <end position="257"/>
    </location>
</feature>
<feature type="region of interest" description="Head domain (RuvB-H)" evidence="1">
    <location>
        <begin position="260"/>
        <end position="348"/>
    </location>
</feature>
<feature type="binding site" evidence="1">
    <location>
        <position position="25"/>
    </location>
    <ligand>
        <name>ATP</name>
        <dbReference type="ChEBI" id="CHEBI:30616"/>
    </ligand>
</feature>
<feature type="binding site" evidence="1">
    <location>
        <position position="26"/>
    </location>
    <ligand>
        <name>ATP</name>
        <dbReference type="ChEBI" id="CHEBI:30616"/>
    </ligand>
</feature>
<feature type="binding site" evidence="1">
    <location>
        <position position="67"/>
    </location>
    <ligand>
        <name>ATP</name>
        <dbReference type="ChEBI" id="CHEBI:30616"/>
    </ligand>
</feature>
<feature type="binding site" evidence="1">
    <location>
        <position position="70"/>
    </location>
    <ligand>
        <name>ATP</name>
        <dbReference type="ChEBI" id="CHEBI:30616"/>
    </ligand>
</feature>
<feature type="binding site" evidence="1">
    <location>
        <position position="71"/>
    </location>
    <ligand>
        <name>ATP</name>
        <dbReference type="ChEBI" id="CHEBI:30616"/>
    </ligand>
</feature>
<feature type="binding site" evidence="1">
    <location>
        <position position="71"/>
    </location>
    <ligand>
        <name>Mg(2+)</name>
        <dbReference type="ChEBI" id="CHEBI:18420"/>
    </ligand>
</feature>
<feature type="binding site" evidence="1">
    <location>
        <position position="72"/>
    </location>
    <ligand>
        <name>ATP</name>
        <dbReference type="ChEBI" id="CHEBI:30616"/>
    </ligand>
</feature>
<feature type="binding site" evidence="1">
    <location>
        <begin position="133"/>
        <end position="135"/>
    </location>
    <ligand>
        <name>ATP</name>
        <dbReference type="ChEBI" id="CHEBI:30616"/>
    </ligand>
</feature>
<feature type="binding site" evidence="1">
    <location>
        <position position="176"/>
    </location>
    <ligand>
        <name>ATP</name>
        <dbReference type="ChEBI" id="CHEBI:30616"/>
    </ligand>
</feature>
<feature type="binding site" evidence="1">
    <location>
        <position position="186"/>
    </location>
    <ligand>
        <name>ATP</name>
        <dbReference type="ChEBI" id="CHEBI:30616"/>
    </ligand>
</feature>
<feature type="binding site" evidence="1">
    <location>
        <position position="223"/>
    </location>
    <ligand>
        <name>ATP</name>
        <dbReference type="ChEBI" id="CHEBI:30616"/>
    </ligand>
</feature>
<feature type="binding site" evidence="1">
    <location>
        <position position="315"/>
    </location>
    <ligand>
        <name>DNA</name>
        <dbReference type="ChEBI" id="CHEBI:16991"/>
    </ligand>
</feature>
<feature type="binding site" evidence="1">
    <location>
        <position position="320"/>
    </location>
    <ligand>
        <name>DNA</name>
        <dbReference type="ChEBI" id="CHEBI:16991"/>
    </ligand>
</feature>
<name>RUVB_FRATH</name>
<sequence>MIETDRIISANTAQTNDENVIDRAIRPKTLAEYEGQPAVREQMEIFIQAAKARKDALDHTLIFGPPGLGKTTLSNIIANEMGVELKQTSGPVLEKAGDLAALLTNLEENDVLFIDEIHRLSPVVEEILYPAMEDYQLDIMIGEGPAARSIKIDLPPFTLVGATTRAGLLTSPLRDRFGIIQRLEFYSIDDLSKIVYRSAKLLNLDITTDGAMEIAKRSRGTPRIANRLLRRVRDYAQVKGSGVICFEIADKALSMLKVDPVGFDHMDHRYLLTLMEKFAGGPVGLDTMSAALSEEKGTIEDVIEPYLIQQGYIMRTARGRIATLLAYNHFKLKIPDNLSADQQQTLSI</sequence>
<protein>
    <recommendedName>
        <fullName evidence="1">Holliday junction branch migration complex subunit RuvB</fullName>
        <ecNumber evidence="1">3.6.4.-</ecNumber>
    </recommendedName>
</protein>
<organism>
    <name type="scientific">Francisella tularensis subsp. holarctica (strain LVS)</name>
    <dbReference type="NCBI Taxonomy" id="376619"/>
    <lineage>
        <taxon>Bacteria</taxon>
        <taxon>Pseudomonadati</taxon>
        <taxon>Pseudomonadota</taxon>
        <taxon>Gammaproteobacteria</taxon>
        <taxon>Thiotrichales</taxon>
        <taxon>Francisellaceae</taxon>
        <taxon>Francisella</taxon>
    </lineage>
</organism>
<accession>Q2A3C8</accession>
<gene>
    <name evidence="1" type="primary">ruvB</name>
    <name type="ordered locus">FTL_1077</name>
</gene>
<proteinExistence type="inferred from homology"/>
<comment type="function">
    <text evidence="1">The RuvA-RuvB-RuvC complex processes Holliday junction (HJ) DNA during genetic recombination and DNA repair, while the RuvA-RuvB complex plays an important role in the rescue of blocked DNA replication forks via replication fork reversal (RFR). RuvA specifically binds to HJ cruciform DNA, conferring on it an open structure. The RuvB hexamer acts as an ATP-dependent pump, pulling dsDNA into and through the RuvAB complex. RuvB forms 2 homohexamers on either side of HJ DNA bound by 1 or 2 RuvA tetramers; 4 subunits per hexamer contact DNA at a time. Coordinated motions by a converter formed by DNA-disengaged RuvB subunits stimulates ATP hydrolysis and nucleotide exchange. Immobilization of the converter enables RuvB to convert the ATP-contained energy into a lever motion, pulling 2 nucleotides of DNA out of the RuvA tetramer per ATP hydrolyzed, thus driving DNA branch migration. The RuvB motors rotate together with the DNA substrate, which together with the progressing nucleotide cycle form the mechanistic basis for DNA recombination by continuous HJ branch migration. Branch migration allows RuvC to scan DNA until it finds its consensus sequence, where it cleaves and resolves cruciform DNA.</text>
</comment>
<comment type="catalytic activity">
    <reaction evidence="1">
        <text>ATP + H2O = ADP + phosphate + H(+)</text>
        <dbReference type="Rhea" id="RHEA:13065"/>
        <dbReference type="ChEBI" id="CHEBI:15377"/>
        <dbReference type="ChEBI" id="CHEBI:15378"/>
        <dbReference type="ChEBI" id="CHEBI:30616"/>
        <dbReference type="ChEBI" id="CHEBI:43474"/>
        <dbReference type="ChEBI" id="CHEBI:456216"/>
    </reaction>
</comment>
<comment type="subunit">
    <text evidence="1">Homohexamer. Forms an RuvA(8)-RuvB(12)-Holliday junction (HJ) complex. HJ DNA is sandwiched between 2 RuvA tetramers; dsDNA enters through RuvA and exits via RuvB. An RuvB hexamer assembles on each DNA strand where it exits the tetramer. Each RuvB hexamer is contacted by two RuvA subunits (via domain III) on 2 adjacent RuvB subunits; this complex drives branch migration. In the full resolvosome a probable DNA-RuvA(4)-RuvB(12)-RuvC(2) complex forms which resolves the HJ.</text>
</comment>
<comment type="subcellular location">
    <subcellularLocation>
        <location evidence="1">Cytoplasm</location>
    </subcellularLocation>
</comment>
<comment type="domain">
    <text evidence="1">Has 3 domains, the large (RuvB-L) and small ATPase (RuvB-S) domains and the C-terminal head (RuvB-H) domain. The head domain binds DNA, while the ATPase domains jointly bind ATP, ADP or are empty depending on the state of the subunit in the translocation cycle. During a single DNA translocation step the structure of each domain remains the same, but their relative positions change.</text>
</comment>
<comment type="similarity">
    <text evidence="1">Belongs to the RuvB family.</text>
</comment>
<keyword id="KW-0067">ATP-binding</keyword>
<keyword id="KW-0963">Cytoplasm</keyword>
<keyword id="KW-0227">DNA damage</keyword>
<keyword id="KW-0233">DNA recombination</keyword>
<keyword id="KW-0234">DNA repair</keyword>
<keyword id="KW-0238">DNA-binding</keyword>
<keyword id="KW-0378">Hydrolase</keyword>
<keyword id="KW-0547">Nucleotide-binding</keyword>
<keyword id="KW-1185">Reference proteome</keyword>
<dbReference type="EC" id="3.6.4.-" evidence="1"/>
<dbReference type="EMBL" id="AM233362">
    <property type="protein sequence ID" value="CAJ79516.1"/>
    <property type="molecule type" value="Genomic_DNA"/>
</dbReference>
<dbReference type="RefSeq" id="WP_003016007.1">
    <property type="nucleotide sequence ID" value="NZ_CP009694.1"/>
</dbReference>
<dbReference type="SMR" id="Q2A3C8"/>
<dbReference type="KEGG" id="ftl:FTL_1077"/>
<dbReference type="Proteomes" id="UP000001944">
    <property type="component" value="Chromosome"/>
</dbReference>
<dbReference type="GO" id="GO:0005737">
    <property type="term" value="C:cytoplasm"/>
    <property type="evidence" value="ECO:0007669"/>
    <property type="project" value="UniProtKB-SubCell"/>
</dbReference>
<dbReference type="GO" id="GO:0048476">
    <property type="term" value="C:Holliday junction resolvase complex"/>
    <property type="evidence" value="ECO:0007669"/>
    <property type="project" value="UniProtKB-UniRule"/>
</dbReference>
<dbReference type="GO" id="GO:0005524">
    <property type="term" value="F:ATP binding"/>
    <property type="evidence" value="ECO:0007669"/>
    <property type="project" value="UniProtKB-UniRule"/>
</dbReference>
<dbReference type="GO" id="GO:0016887">
    <property type="term" value="F:ATP hydrolysis activity"/>
    <property type="evidence" value="ECO:0007669"/>
    <property type="project" value="InterPro"/>
</dbReference>
<dbReference type="GO" id="GO:0000400">
    <property type="term" value="F:four-way junction DNA binding"/>
    <property type="evidence" value="ECO:0007669"/>
    <property type="project" value="UniProtKB-UniRule"/>
</dbReference>
<dbReference type="GO" id="GO:0009378">
    <property type="term" value="F:four-way junction helicase activity"/>
    <property type="evidence" value="ECO:0007669"/>
    <property type="project" value="InterPro"/>
</dbReference>
<dbReference type="GO" id="GO:0006310">
    <property type="term" value="P:DNA recombination"/>
    <property type="evidence" value="ECO:0007669"/>
    <property type="project" value="UniProtKB-UniRule"/>
</dbReference>
<dbReference type="GO" id="GO:0006281">
    <property type="term" value="P:DNA repair"/>
    <property type="evidence" value="ECO:0007669"/>
    <property type="project" value="UniProtKB-UniRule"/>
</dbReference>
<dbReference type="CDD" id="cd00009">
    <property type="entry name" value="AAA"/>
    <property type="match status" value="1"/>
</dbReference>
<dbReference type="FunFam" id="1.10.8.60:FF:000023">
    <property type="entry name" value="Holliday junction ATP-dependent DNA helicase RuvB"/>
    <property type="match status" value="1"/>
</dbReference>
<dbReference type="FunFam" id="3.40.50.300:FF:000073">
    <property type="entry name" value="Holliday junction ATP-dependent DNA helicase RuvB"/>
    <property type="match status" value="1"/>
</dbReference>
<dbReference type="Gene3D" id="1.10.8.60">
    <property type="match status" value="1"/>
</dbReference>
<dbReference type="Gene3D" id="3.40.50.300">
    <property type="entry name" value="P-loop containing nucleotide triphosphate hydrolases"/>
    <property type="match status" value="1"/>
</dbReference>
<dbReference type="Gene3D" id="1.10.10.10">
    <property type="entry name" value="Winged helix-like DNA-binding domain superfamily/Winged helix DNA-binding domain"/>
    <property type="match status" value="1"/>
</dbReference>
<dbReference type="HAMAP" id="MF_00016">
    <property type="entry name" value="DNA_HJ_migration_RuvB"/>
    <property type="match status" value="1"/>
</dbReference>
<dbReference type="InterPro" id="IPR003593">
    <property type="entry name" value="AAA+_ATPase"/>
</dbReference>
<dbReference type="InterPro" id="IPR041445">
    <property type="entry name" value="AAA_lid_4"/>
</dbReference>
<dbReference type="InterPro" id="IPR004605">
    <property type="entry name" value="DNA_helicase_Holl-junc_RuvB"/>
</dbReference>
<dbReference type="InterPro" id="IPR027417">
    <property type="entry name" value="P-loop_NTPase"/>
</dbReference>
<dbReference type="InterPro" id="IPR008824">
    <property type="entry name" value="RuvB-like_N"/>
</dbReference>
<dbReference type="InterPro" id="IPR008823">
    <property type="entry name" value="RuvB_C"/>
</dbReference>
<dbReference type="InterPro" id="IPR036388">
    <property type="entry name" value="WH-like_DNA-bd_sf"/>
</dbReference>
<dbReference type="InterPro" id="IPR036390">
    <property type="entry name" value="WH_DNA-bd_sf"/>
</dbReference>
<dbReference type="NCBIfam" id="NF000868">
    <property type="entry name" value="PRK00080.1"/>
    <property type="match status" value="1"/>
</dbReference>
<dbReference type="NCBIfam" id="TIGR00635">
    <property type="entry name" value="ruvB"/>
    <property type="match status" value="1"/>
</dbReference>
<dbReference type="PANTHER" id="PTHR42848">
    <property type="match status" value="1"/>
</dbReference>
<dbReference type="PANTHER" id="PTHR42848:SF1">
    <property type="entry name" value="HOLLIDAY JUNCTION BRANCH MIGRATION COMPLEX SUBUNIT RUVB"/>
    <property type="match status" value="1"/>
</dbReference>
<dbReference type="Pfam" id="PF17864">
    <property type="entry name" value="AAA_lid_4"/>
    <property type="match status" value="1"/>
</dbReference>
<dbReference type="Pfam" id="PF05491">
    <property type="entry name" value="RuvB_C"/>
    <property type="match status" value="1"/>
</dbReference>
<dbReference type="Pfam" id="PF05496">
    <property type="entry name" value="RuvB_N"/>
    <property type="match status" value="1"/>
</dbReference>
<dbReference type="SMART" id="SM00382">
    <property type="entry name" value="AAA"/>
    <property type="match status" value="1"/>
</dbReference>
<dbReference type="SUPFAM" id="SSF52540">
    <property type="entry name" value="P-loop containing nucleoside triphosphate hydrolases"/>
    <property type="match status" value="1"/>
</dbReference>
<dbReference type="SUPFAM" id="SSF46785">
    <property type="entry name" value="Winged helix' DNA-binding domain"/>
    <property type="match status" value="1"/>
</dbReference>
<reference key="1">
    <citation type="submission" date="2006-03" db="EMBL/GenBank/DDBJ databases">
        <title>Complete genome sequence of Francisella tularensis LVS (Live Vaccine Strain).</title>
        <authorList>
            <person name="Chain P."/>
            <person name="Larimer F."/>
            <person name="Land M."/>
            <person name="Stilwagen S."/>
            <person name="Larsson P."/>
            <person name="Bearden S."/>
            <person name="Chu M."/>
            <person name="Oyston P."/>
            <person name="Forsman M."/>
            <person name="Andersson S."/>
            <person name="Lindler L."/>
            <person name="Titball R."/>
            <person name="Garcia E."/>
        </authorList>
    </citation>
    <scope>NUCLEOTIDE SEQUENCE [LARGE SCALE GENOMIC DNA]</scope>
    <source>
        <strain>LVS</strain>
    </source>
</reference>
<evidence type="ECO:0000255" key="1">
    <source>
        <dbReference type="HAMAP-Rule" id="MF_00016"/>
    </source>
</evidence>